<name>ILVC_STRSV</name>
<reference key="1">
    <citation type="journal article" date="2007" name="J. Bacteriol.">
        <title>Genome of the opportunistic pathogen Streptococcus sanguinis.</title>
        <authorList>
            <person name="Xu P."/>
            <person name="Alves J.M."/>
            <person name="Kitten T."/>
            <person name="Brown A."/>
            <person name="Chen Z."/>
            <person name="Ozaki L.S."/>
            <person name="Manque P."/>
            <person name="Ge X."/>
            <person name="Serrano M.G."/>
            <person name="Puiu D."/>
            <person name="Hendricks S."/>
            <person name="Wang Y."/>
            <person name="Chaplin M.D."/>
            <person name="Akan D."/>
            <person name="Paik S."/>
            <person name="Peterson D.L."/>
            <person name="Macrina F.L."/>
            <person name="Buck G.A."/>
        </authorList>
    </citation>
    <scope>NUCLEOTIDE SEQUENCE [LARGE SCALE GENOMIC DNA]</scope>
    <source>
        <strain>SK36</strain>
    </source>
</reference>
<proteinExistence type="inferred from homology"/>
<gene>
    <name evidence="1" type="primary">ilvC</name>
    <name type="ordered locus">SSA_1968</name>
</gene>
<sequence>MAVTMEYEKDVKVAALDGKKIAVIGYGSQGHAHAQNLRDTGHDVIIGVRPGKSFDKAKEDGFDTYTVAEAAKLADVIMILAPDEIQQDLYEAEIAPNLEAGNAVGFAHGFNIHFEFIKVPADVDVFMCAPKGPGHLVRRTFEEGFGVPALYAVYQDATGNAKDIAMDWCKGVGSARVGLLETTYKEETEEDLFGEQAVLCGGLTALIEAGFEVLTEAGYAPELAYFEVLHEMKLIVDLIYEGGFKKMRQSISNTAEYGDYVSGPRVITEQVKENMKAVLADIQNGKFANDFVDDYKAGRPKLTAYREQAANLEIEKVGAELRKAMPFVGKNDDDAFKIYN</sequence>
<protein>
    <recommendedName>
        <fullName evidence="1">Ketol-acid reductoisomerase (NADP(+))</fullName>
        <shortName evidence="1">KARI</shortName>
        <ecNumber evidence="1">1.1.1.86</ecNumber>
    </recommendedName>
    <alternativeName>
        <fullName evidence="1">Acetohydroxy-acid isomeroreductase</fullName>
        <shortName evidence="1">AHIR</shortName>
    </alternativeName>
    <alternativeName>
        <fullName evidence="1">Alpha-keto-beta-hydroxylacyl reductoisomerase</fullName>
    </alternativeName>
    <alternativeName>
        <fullName evidence="1">Ketol-acid reductoisomerase type 1</fullName>
    </alternativeName>
    <alternativeName>
        <fullName evidence="1">Ketol-acid reductoisomerase type I</fullName>
    </alternativeName>
</protein>
<evidence type="ECO:0000255" key="1">
    <source>
        <dbReference type="HAMAP-Rule" id="MF_00435"/>
    </source>
</evidence>
<evidence type="ECO:0000255" key="2">
    <source>
        <dbReference type="PROSITE-ProRule" id="PRU01197"/>
    </source>
</evidence>
<evidence type="ECO:0000255" key="3">
    <source>
        <dbReference type="PROSITE-ProRule" id="PRU01198"/>
    </source>
</evidence>
<keyword id="KW-0028">Amino-acid biosynthesis</keyword>
<keyword id="KW-0100">Branched-chain amino acid biosynthesis</keyword>
<keyword id="KW-0460">Magnesium</keyword>
<keyword id="KW-0479">Metal-binding</keyword>
<keyword id="KW-0521">NADP</keyword>
<keyword id="KW-0560">Oxidoreductase</keyword>
<keyword id="KW-1185">Reference proteome</keyword>
<accession>A3CQ86</accession>
<dbReference type="EC" id="1.1.1.86" evidence="1"/>
<dbReference type="EMBL" id="CP000387">
    <property type="protein sequence ID" value="ABN45341.1"/>
    <property type="molecule type" value="Genomic_DNA"/>
</dbReference>
<dbReference type="RefSeq" id="WP_002893657.1">
    <property type="nucleotide sequence ID" value="NC_009009.1"/>
</dbReference>
<dbReference type="RefSeq" id="YP_001035891.1">
    <property type="nucleotide sequence ID" value="NC_009009.1"/>
</dbReference>
<dbReference type="SMR" id="A3CQ86"/>
<dbReference type="STRING" id="388919.SSA_1968"/>
<dbReference type="KEGG" id="ssa:SSA_1968"/>
<dbReference type="PATRIC" id="fig|388919.9.peg.1865"/>
<dbReference type="eggNOG" id="COG0059">
    <property type="taxonomic scope" value="Bacteria"/>
</dbReference>
<dbReference type="HOGENOM" id="CLU_033821_0_1_9"/>
<dbReference type="OrthoDB" id="9804088at2"/>
<dbReference type="UniPathway" id="UPA00047">
    <property type="reaction ID" value="UER00056"/>
</dbReference>
<dbReference type="UniPathway" id="UPA00049">
    <property type="reaction ID" value="UER00060"/>
</dbReference>
<dbReference type="Proteomes" id="UP000002148">
    <property type="component" value="Chromosome"/>
</dbReference>
<dbReference type="GO" id="GO:0005829">
    <property type="term" value="C:cytosol"/>
    <property type="evidence" value="ECO:0007669"/>
    <property type="project" value="TreeGrafter"/>
</dbReference>
<dbReference type="GO" id="GO:0004455">
    <property type="term" value="F:ketol-acid reductoisomerase activity"/>
    <property type="evidence" value="ECO:0007669"/>
    <property type="project" value="UniProtKB-UniRule"/>
</dbReference>
<dbReference type="GO" id="GO:0000287">
    <property type="term" value="F:magnesium ion binding"/>
    <property type="evidence" value="ECO:0007669"/>
    <property type="project" value="UniProtKB-UniRule"/>
</dbReference>
<dbReference type="GO" id="GO:0050661">
    <property type="term" value="F:NADP binding"/>
    <property type="evidence" value="ECO:0007669"/>
    <property type="project" value="InterPro"/>
</dbReference>
<dbReference type="GO" id="GO:0009097">
    <property type="term" value="P:isoleucine biosynthetic process"/>
    <property type="evidence" value="ECO:0007669"/>
    <property type="project" value="UniProtKB-UniRule"/>
</dbReference>
<dbReference type="GO" id="GO:0009099">
    <property type="term" value="P:L-valine biosynthetic process"/>
    <property type="evidence" value="ECO:0007669"/>
    <property type="project" value="UniProtKB-UniRule"/>
</dbReference>
<dbReference type="FunFam" id="3.40.50.720:FF:000023">
    <property type="entry name" value="Ketol-acid reductoisomerase (NADP(+))"/>
    <property type="match status" value="1"/>
</dbReference>
<dbReference type="Gene3D" id="6.10.240.10">
    <property type="match status" value="1"/>
</dbReference>
<dbReference type="Gene3D" id="3.40.50.720">
    <property type="entry name" value="NAD(P)-binding Rossmann-like Domain"/>
    <property type="match status" value="1"/>
</dbReference>
<dbReference type="HAMAP" id="MF_00435">
    <property type="entry name" value="IlvC"/>
    <property type="match status" value="1"/>
</dbReference>
<dbReference type="InterPro" id="IPR008927">
    <property type="entry name" value="6-PGluconate_DH-like_C_sf"/>
</dbReference>
<dbReference type="InterPro" id="IPR013023">
    <property type="entry name" value="KARI"/>
</dbReference>
<dbReference type="InterPro" id="IPR000506">
    <property type="entry name" value="KARI_C"/>
</dbReference>
<dbReference type="InterPro" id="IPR013116">
    <property type="entry name" value="KARI_N"/>
</dbReference>
<dbReference type="InterPro" id="IPR014359">
    <property type="entry name" value="KARI_prok"/>
</dbReference>
<dbReference type="InterPro" id="IPR036291">
    <property type="entry name" value="NAD(P)-bd_dom_sf"/>
</dbReference>
<dbReference type="NCBIfam" id="TIGR00465">
    <property type="entry name" value="ilvC"/>
    <property type="match status" value="1"/>
</dbReference>
<dbReference type="NCBIfam" id="NF004017">
    <property type="entry name" value="PRK05479.1"/>
    <property type="match status" value="1"/>
</dbReference>
<dbReference type="NCBIfam" id="NF009940">
    <property type="entry name" value="PRK13403.1"/>
    <property type="match status" value="1"/>
</dbReference>
<dbReference type="PANTHER" id="PTHR21371">
    <property type="entry name" value="KETOL-ACID REDUCTOISOMERASE, MITOCHONDRIAL"/>
    <property type="match status" value="1"/>
</dbReference>
<dbReference type="PANTHER" id="PTHR21371:SF1">
    <property type="entry name" value="KETOL-ACID REDUCTOISOMERASE, MITOCHONDRIAL"/>
    <property type="match status" value="1"/>
</dbReference>
<dbReference type="Pfam" id="PF01450">
    <property type="entry name" value="KARI_C"/>
    <property type="match status" value="1"/>
</dbReference>
<dbReference type="Pfam" id="PF07991">
    <property type="entry name" value="KARI_N"/>
    <property type="match status" value="1"/>
</dbReference>
<dbReference type="PIRSF" id="PIRSF000116">
    <property type="entry name" value="IlvC_gammaproteo"/>
    <property type="match status" value="1"/>
</dbReference>
<dbReference type="SUPFAM" id="SSF48179">
    <property type="entry name" value="6-phosphogluconate dehydrogenase C-terminal domain-like"/>
    <property type="match status" value="1"/>
</dbReference>
<dbReference type="SUPFAM" id="SSF51735">
    <property type="entry name" value="NAD(P)-binding Rossmann-fold domains"/>
    <property type="match status" value="1"/>
</dbReference>
<dbReference type="PROSITE" id="PS51851">
    <property type="entry name" value="KARI_C"/>
    <property type="match status" value="1"/>
</dbReference>
<dbReference type="PROSITE" id="PS51850">
    <property type="entry name" value="KARI_N"/>
    <property type="match status" value="1"/>
</dbReference>
<comment type="function">
    <text evidence="1">Involved in the biosynthesis of branched-chain amino acids (BCAA). Catalyzes an alkyl-migration followed by a ketol-acid reduction of (S)-2-acetolactate (S2AL) to yield (R)-2,3-dihydroxy-isovalerate. In the isomerase reaction, S2AL is rearranged via a Mg-dependent methyl migration to produce 3-hydroxy-3-methyl-2-ketobutyrate (HMKB). In the reductase reaction, this 2-ketoacid undergoes a metal-dependent reduction by NADPH to yield (R)-2,3-dihydroxy-isovalerate.</text>
</comment>
<comment type="catalytic activity">
    <reaction evidence="1">
        <text>(2R)-2,3-dihydroxy-3-methylbutanoate + NADP(+) = (2S)-2-acetolactate + NADPH + H(+)</text>
        <dbReference type="Rhea" id="RHEA:22068"/>
        <dbReference type="ChEBI" id="CHEBI:15378"/>
        <dbReference type="ChEBI" id="CHEBI:49072"/>
        <dbReference type="ChEBI" id="CHEBI:57783"/>
        <dbReference type="ChEBI" id="CHEBI:58349"/>
        <dbReference type="ChEBI" id="CHEBI:58476"/>
        <dbReference type="EC" id="1.1.1.86"/>
    </reaction>
</comment>
<comment type="catalytic activity">
    <reaction evidence="1">
        <text>(2R,3R)-2,3-dihydroxy-3-methylpentanoate + NADP(+) = (S)-2-ethyl-2-hydroxy-3-oxobutanoate + NADPH + H(+)</text>
        <dbReference type="Rhea" id="RHEA:13493"/>
        <dbReference type="ChEBI" id="CHEBI:15378"/>
        <dbReference type="ChEBI" id="CHEBI:49256"/>
        <dbReference type="ChEBI" id="CHEBI:49258"/>
        <dbReference type="ChEBI" id="CHEBI:57783"/>
        <dbReference type="ChEBI" id="CHEBI:58349"/>
        <dbReference type="EC" id="1.1.1.86"/>
    </reaction>
</comment>
<comment type="cofactor">
    <cofactor evidence="1">
        <name>Mg(2+)</name>
        <dbReference type="ChEBI" id="CHEBI:18420"/>
    </cofactor>
    <text evidence="1">Binds 2 magnesium ions per subunit.</text>
</comment>
<comment type="pathway">
    <text evidence="1">Amino-acid biosynthesis; L-isoleucine biosynthesis; L-isoleucine from 2-oxobutanoate: step 2/4.</text>
</comment>
<comment type="pathway">
    <text evidence="1">Amino-acid biosynthesis; L-valine biosynthesis; L-valine from pyruvate: step 2/4.</text>
</comment>
<comment type="similarity">
    <text evidence="1">Belongs to the ketol-acid reductoisomerase family.</text>
</comment>
<feature type="chain" id="PRO_1000050580" description="Ketol-acid reductoisomerase (NADP(+))">
    <location>
        <begin position="1"/>
        <end position="340"/>
    </location>
</feature>
<feature type="domain" description="KARI N-terminal Rossmann" evidence="2">
    <location>
        <begin position="5"/>
        <end position="182"/>
    </location>
</feature>
<feature type="domain" description="KARI C-terminal knotted" evidence="3">
    <location>
        <begin position="183"/>
        <end position="328"/>
    </location>
</feature>
<feature type="active site" evidence="1">
    <location>
        <position position="108"/>
    </location>
</feature>
<feature type="binding site" evidence="1">
    <location>
        <begin position="26"/>
        <end position="29"/>
    </location>
    <ligand>
        <name>NADP(+)</name>
        <dbReference type="ChEBI" id="CHEBI:58349"/>
    </ligand>
</feature>
<feature type="binding site" evidence="1">
    <location>
        <position position="49"/>
    </location>
    <ligand>
        <name>NADP(+)</name>
        <dbReference type="ChEBI" id="CHEBI:58349"/>
    </ligand>
</feature>
<feature type="binding site" evidence="1">
    <location>
        <position position="53"/>
    </location>
    <ligand>
        <name>NADP(+)</name>
        <dbReference type="ChEBI" id="CHEBI:58349"/>
    </ligand>
</feature>
<feature type="binding site" evidence="1">
    <location>
        <begin position="83"/>
        <end position="86"/>
    </location>
    <ligand>
        <name>NADP(+)</name>
        <dbReference type="ChEBI" id="CHEBI:58349"/>
    </ligand>
</feature>
<feature type="binding site" evidence="1">
    <location>
        <position position="134"/>
    </location>
    <ligand>
        <name>NADP(+)</name>
        <dbReference type="ChEBI" id="CHEBI:58349"/>
    </ligand>
</feature>
<feature type="binding site" evidence="1">
    <location>
        <position position="191"/>
    </location>
    <ligand>
        <name>Mg(2+)</name>
        <dbReference type="ChEBI" id="CHEBI:18420"/>
        <label>1</label>
    </ligand>
</feature>
<feature type="binding site" evidence="1">
    <location>
        <position position="191"/>
    </location>
    <ligand>
        <name>Mg(2+)</name>
        <dbReference type="ChEBI" id="CHEBI:18420"/>
        <label>2</label>
    </ligand>
</feature>
<feature type="binding site" evidence="1">
    <location>
        <position position="195"/>
    </location>
    <ligand>
        <name>Mg(2+)</name>
        <dbReference type="ChEBI" id="CHEBI:18420"/>
        <label>1</label>
    </ligand>
</feature>
<feature type="binding site" evidence="1">
    <location>
        <position position="227"/>
    </location>
    <ligand>
        <name>Mg(2+)</name>
        <dbReference type="ChEBI" id="CHEBI:18420"/>
        <label>2</label>
    </ligand>
</feature>
<feature type="binding site" evidence="1">
    <location>
        <position position="231"/>
    </location>
    <ligand>
        <name>Mg(2+)</name>
        <dbReference type="ChEBI" id="CHEBI:18420"/>
        <label>2</label>
    </ligand>
</feature>
<feature type="binding site" evidence="1">
    <location>
        <position position="252"/>
    </location>
    <ligand>
        <name>substrate</name>
    </ligand>
</feature>
<organism>
    <name type="scientific">Streptococcus sanguinis (strain SK36)</name>
    <dbReference type="NCBI Taxonomy" id="388919"/>
    <lineage>
        <taxon>Bacteria</taxon>
        <taxon>Bacillati</taxon>
        <taxon>Bacillota</taxon>
        <taxon>Bacilli</taxon>
        <taxon>Lactobacillales</taxon>
        <taxon>Streptococcaceae</taxon>
        <taxon>Streptococcus</taxon>
    </lineage>
</organism>